<feature type="chain" id="PRO_0000119984" description="Putative F-box protein L126">
    <location>
        <begin position="1"/>
        <end position="255"/>
    </location>
</feature>
<feature type="domain" description="F-box" evidence="1">
    <location>
        <begin position="1"/>
        <end position="46"/>
    </location>
</feature>
<name>YL126_MIMIV</name>
<sequence length="255" mass="30040">MLPEEILFMVFSFLDVKELIACSHACSHACSQWRRICSDKLLWVQKAELFGPESPIEQFINWRKLLCVEGSYSILTRKKIIRGIAISNSGMCKAYNYGVIFLEKYHNSYRENEVYYKPYPLFDSIKYIENILSCSYGNEDPYYFYRIDIDNRVPNENIPDIIENFIGMSKKYPFINIFAFVCTQEKIQVITPLVSGLNLTMKIFHQDRWENVSEWISEVIWKRDFMCGSTFCLKKLPSLSELSVLSRYESELVTY</sequence>
<proteinExistence type="predicted"/>
<gene>
    <name type="ordered locus">MIMI_L126</name>
</gene>
<dbReference type="EMBL" id="AY653733">
    <property type="protein sequence ID" value="AAV50401.1"/>
    <property type="molecule type" value="Genomic_DNA"/>
</dbReference>
<dbReference type="KEGG" id="vg:9924725"/>
<dbReference type="Proteomes" id="UP000001134">
    <property type="component" value="Genome"/>
</dbReference>
<dbReference type="CDD" id="cd09917">
    <property type="entry name" value="F-box_SF"/>
    <property type="match status" value="1"/>
</dbReference>
<dbReference type="Gene3D" id="1.20.1280.50">
    <property type="match status" value="1"/>
</dbReference>
<dbReference type="InterPro" id="IPR036047">
    <property type="entry name" value="F-box-like_dom_sf"/>
</dbReference>
<dbReference type="InterPro" id="IPR001810">
    <property type="entry name" value="F-box_dom"/>
</dbReference>
<dbReference type="Pfam" id="PF12937">
    <property type="entry name" value="F-box-like"/>
    <property type="match status" value="1"/>
</dbReference>
<dbReference type="SMART" id="SM00256">
    <property type="entry name" value="FBOX"/>
    <property type="match status" value="1"/>
</dbReference>
<dbReference type="SUPFAM" id="SSF81383">
    <property type="entry name" value="F-box domain"/>
    <property type="match status" value="1"/>
</dbReference>
<dbReference type="PROSITE" id="PS50181">
    <property type="entry name" value="FBOX"/>
    <property type="match status" value="1"/>
</dbReference>
<organismHost>
    <name type="scientific">Acanthamoeba polyphaga</name>
    <name type="common">Amoeba</name>
    <dbReference type="NCBI Taxonomy" id="5757"/>
</organismHost>
<protein>
    <recommendedName>
        <fullName>Putative F-box protein L126</fullName>
    </recommendedName>
</protein>
<accession>Q5UPK2</accession>
<keyword id="KW-1185">Reference proteome</keyword>
<reference key="1">
    <citation type="journal article" date="2004" name="Science">
        <title>The 1.2-megabase genome sequence of Mimivirus.</title>
        <authorList>
            <person name="Raoult D."/>
            <person name="Audic S."/>
            <person name="Robert C."/>
            <person name="Abergel C."/>
            <person name="Renesto P."/>
            <person name="Ogata H."/>
            <person name="La Scola B."/>
            <person name="Susan M."/>
            <person name="Claverie J.-M."/>
        </authorList>
    </citation>
    <scope>NUCLEOTIDE SEQUENCE [LARGE SCALE GENOMIC DNA]</scope>
    <source>
        <strain>Rowbotham-Bradford</strain>
    </source>
</reference>
<evidence type="ECO:0000255" key="1">
    <source>
        <dbReference type="PROSITE-ProRule" id="PRU00080"/>
    </source>
</evidence>
<organism>
    <name type="scientific">Acanthamoeba polyphaga mimivirus</name>
    <name type="common">APMV</name>
    <dbReference type="NCBI Taxonomy" id="212035"/>
    <lineage>
        <taxon>Viruses</taxon>
        <taxon>Varidnaviria</taxon>
        <taxon>Bamfordvirae</taxon>
        <taxon>Nucleocytoviricota</taxon>
        <taxon>Megaviricetes</taxon>
        <taxon>Imitervirales</taxon>
        <taxon>Mimiviridae</taxon>
        <taxon>Megamimivirinae</taxon>
        <taxon>Mimivirus</taxon>
        <taxon>Mimivirus bradfordmassiliense</taxon>
    </lineage>
</organism>